<organism>
    <name type="scientific">Oryza sativa subsp. japonica</name>
    <name type="common">Rice</name>
    <dbReference type="NCBI Taxonomy" id="39947"/>
    <lineage>
        <taxon>Eukaryota</taxon>
        <taxon>Viridiplantae</taxon>
        <taxon>Streptophyta</taxon>
        <taxon>Embryophyta</taxon>
        <taxon>Tracheophyta</taxon>
        <taxon>Spermatophyta</taxon>
        <taxon>Magnoliopsida</taxon>
        <taxon>Liliopsida</taxon>
        <taxon>Poales</taxon>
        <taxon>Poaceae</taxon>
        <taxon>BOP clade</taxon>
        <taxon>Oryzoideae</taxon>
        <taxon>Oryzeae</taxon>
        <taxon>Oryzinae</taxon>
        <taxon>Oryza</taxon>
        <taxon>Oryza sativa</taxon>
    </lineage>
</organism>
<gene>
    <name evidence="5" type="primary">NEK2</name>
    <name evidence="9" type="ordered locus">Os12g0604700</name>
    <name evidence="8" type="ordered locus">LOC_Os12g41180</name>
    <name evidence="10" type="ORF">OsJ_035350</name>
</gene>
<keyword id="KW-0067">ATP-binding</keyword>
<keyword id="KW-0418">Kinase</keyword>
<keyword id="KW-0547">Nucleotide-binding</keyword>
<keyword id="KW-1185">Reference proteome</keyword>
<keyword id="KW-0723">Serine/threonine-protein kinase</keyword>
<keyword id="KW-0808">Transferase</keyword>
<protein>
    <recommendedName>
        <fullName evidence="6">Serine/threonine-protein kinase Nek2</fullName>
        <ecNumber evidence="6">2.7.11.1</ecNumber>
    </recommendedName>
    <alternativeName>
        <fullName evidence="5">NimA-related protein kinase 2</fullName>
    </alternativeName>
    <alternativeName>
        <fullName evidence="5">OsNek2</fullName>
    </alternativeName>
</protein>
<reference key="1">
    <citation type="journal article" date="2005" name="BMC Biol.">
        <title>The sequence of rice chromosomes 11 and 12, rich in disease resistance genes and recent gene duplications.</title>
        <authorList>
            <consortium name="The rice chromosomes 11 and 12 sequencing consortia"/>
        </authorList>
    </citation>
    <scope>NUCLEOTIDE SEQUENCE [LARGE SCALE GENOMIC DNA]</scope>
    <source>
        <strain>cv. Nipponbare</strain>
    </source>
</reference>
<reference key="2">
    <citation type="journal article" date="2005" name="Nature">
        <title>The map-based sequence of the rice genome.</title>
        <authorList>
            <consortium name="International rice genome sequencing project (IRGSP)"/>
        </authorList>
    </citation>
    <scope>NUCLEOTIDE SEQUENCE [LARGE SCALE GENOMIC DNA]</scope>
    <source>
        <strain>cv. Nipponbare</strain>
    </source>
</reference>
<reference key="3">
    <citation type="journal article" date="2008" name="Nucleic Acids Res.">
        <title>The rice annotation project database (RAP-DB): 2008 update.</title>
        <authorList>
            <consortium name="The rice annotation project (RAP)"/>
        </authorList>
    </citation>
    <scope>GENOME REANNOTATION</scope>
    <source>
        <strain>cv. Nipponbare</strain>
    </source>
</reference>
<reference key="4">
    <citation type="journal article" date="2013" name="Rice">
        <title>Improvement of the Oryza sativa Nipponbare reference genome using next generation sequence and optical map data.</title>
        <authorList>
            <person name="Kawahara Y."/>
            <person name="de la Bastide M."/>
            <person name="Hamilton J.P."/>
            <person name="Kanamori H."/>
            <person name="McCombie W.R."/>
            <person name="Ouyang S."/>
            <person name="Schwartz D.C."/>
            <person name="Tanaka T."/>
            <person name="Wu J."/>
            <person name="Zhou S."/>
            <person name="Childs K.L."/>
            <person name="Davidson R.M."/>
            <person name="Lin H."/>
            <person name="Quesada-Ocampo L."/>
            <person name="Vaillancourt B."/>
            <person name="Sakai H."/>
            <person name="Lee S.S."/>
            <person name="Kim J."/>
            <person name="Numa H."/>
            <person name="Itoh T."/>
            <person name="Buell C.R."/>
            <person name="Matsumoto T."/>
        </authorList>
    </citation>
    <scope>GENOME REANNOTATION</scope>
    <source>
        <strain>cv. Nipponbare</strain>
    </source>
</reference>
<reference key="5">
    <citation type="journal article" date="2005" name="PLoS Biol.">
        <title>The genomes of Oryza sativa: a history of duplications.</title>
        <authorList>
            <person name="Yu J."/>
            <person name="Wang J."/>
            <person name="Lin W."/>
            <person name="Li S."/>
            <person name="Li H."/>
            <person name="Zhou J."/>
            <person name="Ni P."/>
            <person name="Dong W."/>
            <person name="Hu S."/>
            <person name="Zeng C."/>
            <person name="Zhang J."/>
            <person name="Zhang Y."/>
            <person name="Li R."/>
            <person name="Xu Z."/>
            <person name="Li S."/>
            <person name="Li X."/>
            <person name="Zheng H."/>
            <person name="Cong L."/>
            <person name="Lin L."/>
            <person name="Yin J."/>
            <person name="Geng J."/>
            <person name="Li G."/>
            <person name="Shi J."/>
            <person name="Liu J."/>
            <person name="Lv H."/>
            <person name="Li J."/>
            <person name="Wang J."/>
            <person name="Deng Y."/>
            <person name="Ran L."/>
            <person name="Shi X."/>
            <person name="Wang X."/>
            <person name="Wu Q."/>
            <person name="Li C."/>
            <person name="Ren X."/>
            <person name="Wang J."/>
            <person name="Wang X."/>
            <person name="Li D."/>
            <person name="Liu D."/>
            <person name="Zhang X."/>
            <person name="Ji Z."/>
            <person name="Zhao W."/>
            <person name="Sun Y."/>
            <person name="Zhang Z."/>
            <person name="Bao J."/>
            <person name="Han Y."/>
            <person name="Dong L."/>
            <person name="Ji J."/>
            <person name="Chen P."/>
            <person name="Wu S."/>
            <person name="Liu J."/>
            <person name="Xiao Y."/>
            <person name="Bu D."/>
            <person name="Tan J."/>
            <person name="Yang L."/>
            <person name="Ye C."/>
            <person name="Zhang J."/>
            <person name="Xu J."/>
            <person name="Zhou Y."/>
            <person name="Yu Y."/>
            <person name="Zhang B."/>
            <person name="Zhuang S."/>
            <person name="Wei H."/>
            <person name="Liu B."/>
            <person name="Lei M."/>
            <person name="Yu H."/>
            <person name="Li Y."/>
            <person name="Xu H."/>
            <person name="Wei S."/>
            <person name="He X."/>
            <person name="Fang L."/>
            <person name="Zhang Z."/>
            <person name="Zhang Y."/>
            <person name="Huang X."/>
            <person name="Su Z."/>
            <person name="Tong W."/>
            <person name="Li J."/>
            <person name="Tong Z."/>
            <person name="Li S."/>
            <person name="Ye J."/>
            <person name="Wang L."/>
            <person name="Fang L."/>
            <person name="Lei T."/>
            <person name="Chen C.-S."/>
            <person name="Chen H.-C."/>
            <person name="Xu Z."/>
            <person name="Li H."/>
            <person name="Huang H."/>
            <person name="Zhang F."/>
            <person name="Xu H."/>
            <person name="Li N."/>
            <person name="Zhao C."/>
            <person name="Li S."/>
            <person name="Dong L."/>
            <person name="Huang Y."/>
            <person name="Li L."/>
            <person name="Xi Y."/>
            <person name="Qi Q."/>
            <person name="Li W."/>
            <person name="Zhang B."/>
            <person name="Hu W."/>
            <person name="Zhang Y."/>
            <person name="Tian X."/>
            <person name="Jiao Y."/>
            <person name="Liang X."/>
            <person name="Jin J."/>
            <person name="Gao L."/>
            <person name="Zheng W."/>
            <person name="Hao B."/>
            <person name="Liu S.-M."/>
            <person name="Wang W."/>
            <person name="Yuan L."/>
            <person name="Cao M."/>
            <person name="McDermott J."/>
            <person name="Samudrala R."/>
            <person name="Wang J."/>
            <person name="Wong G.K.-S."/>
            <person name="Yang H."/>
        </authorList>
    </citation>
    <scope>NUCLEOTIDE SEQUENCE [LARGE SCALE GENOMIC DNA]</scope>
    <source>
        <strain>cv. Nipponbare</strain>
    </source>
</reference>
<reference key="6">
    <citation type="journal article" date="2003" name="Science">
        <title>Collection, mapping, and annotation of over 28,000 cDNA clones from japonica rice.</title>
        <authorList>
            <consortium name="The rice full-length cDNA consortium"/>
        </authorList>
    </citation>
    <scope>NUCLEOTIDE SEQUENCE [LARGE SCALE MRNA]</scope>
    <source>
        <strain>cv. Nipponbare</strain>
    </source>
</reference>
<reference key="7">
    <citation type="journal article" date="2007" name="Plant J.">
        <title>Members of the plant NIMA-related kinases are involved in organ development and vascularization in poplar, Arabidopsis and rice.</title>
        <authorList>
            <person name="Vigneault F."/>
            <person name="Lachance D."/>
            <person name="Cloutier M."/>
            <person name="Pelletier G."/>
            <person name="Levasseur C."/>
            <person name="Seguin A."/>
        </authorList>
    </citation>
    <scope>FUNCTION</scope>
    <scope>GENE FAMILY</scope>
    <scope>NOMENCLATURE</scope>
</reference>
<reference key="8">
    <citation type="journal article" date="2009" name="Plant Cell Physiol.">
        <title>Cytoplasmic male sterility-related protein kinase, OsNek3, is regulated downstream of mitochondrial protein phosphatase 2C, DCW11.</title>
        <authorList>
            <person name="Fujii S."/>
            <person name="Yamada M."/>
            <person name="Toriyama K."/>
        </authorList>
    </citation>
    <scope>TISSUE SPECIFICITY</scope>
</reference>
<sequence length="591" mass="66029">MDQYEVLEQIGKGAFGSALLVRHKLEKKKYVLKKIRLARQTDRTRRSAHQEMQLIATVRNPFIVEYKDSWVEKGCYVCIVIGYCEGGDMAEAIKRANGTYFSEEKLCKWLVQLLMALDYLHANHILHRDVKCSNIFIARDQSIRLGDFGLAKILTSDDLASSVVGTPSYMCPELLADIPYGTKSDIWSLGCCIYEMTALRPAFKAFDMQALINKITKSIVSPLPTKYSGAFRGLIKSMLRKSPEHRPSAAQLLKHPQLQPYVLQVQLKSSPTRNILPIHQSLTDKVKKMTFPSDVVDSARRRMARRNSLGNERTVTFSKPSPERNSVSSTRSIKEYTTTQSVKGLSVDSSEAGDEVTSKAIITKTSSILRTPKSLPAKTYTARNQLEPPKTSYNRTYRSELPSKTTPNKIARPARRASLPLSTYETPTKRSISILEQLDSPDVSVNAPRIDRIAEFPLASSEDPLLPIHNKLSPGHGSCSTPPFINRSITKDKCTIQVLRTDGDNGSDSSGRNATAASSRGSNDSRQQRFDTSSFQQRAEALEGLLEFSAQLLQQERYEELGILLKPFGPEKASPRETAIWLTKSFKETAS</sequence>
<evidence type="ECO:0000255" key="1">
    <source>
        <dbReference type="PROSITE-ProRule" id="PRU00159"/>
    </source>
</evidence>
<evidence type="ECO:0000255" key="2">
    <source>
        <dbReference type="PROSITE-ProRule" id="PRU10027"/>
    </source>
</evidence>
<evidence type="ECO:0000256" key="3">
    <source>
        <dbReference type="SAM" id="MobiDB-lite"/>
    </source>
</evidence>
<evidence type="ECO:0000269" key="4">
    <source>
    </source>
</evidence>
<evidence type="ECO:0000303" key="5">
    <source>
    </source>
</evidence>
<evidence type="ECO:0000305" key="6"/>
<evidence type="ECO:0000305" key="7">
    <source>
    </source>
</evidence>
<evidence type="ECO:0000312" key="8">
    <source>
        <dbReference type="EMBL" id="ABA99823.1"/>
    </source>
</evidence>
<evidence type="ECO:0000312" key="9">
    <source>
        <dbReference type="EMBL" id="BAT17975.1"/>
    </source>
</evidence>
<evidence type="ECO:0000312" key="10">
    <source>
        <dbReference type="EMBL" id="EAZ21141.1"/>
    </source>
</evidence>
<comment type="function">
    <text evidence="7">May be involved in plant development processes.</text>
</comment>
<comment type="catalytic activity">
    <reaction evidence="6">
        <text>L-seryl-[protein] + ATP = O-phospho-L-seryl-[protein] + ADP + H(+)</text>
        <dbReference type="Rhea" id="RHEA:17989"/>
        <dbReference type="Rhea" id="RHEA-COMP:9863"/>
        <dbReference type="Rhea" id="RHEA-COMP:11604"/>
        <dbReference type="ChEBI" id="CHEBI:15378"/>
        <dbReference type="ChEBI" id="CHEBI:29999"/>
        <dbReference type="ChEBI" id="CHEBI:30616"/>
        <dbReference type="ChEBI" id="CHEBI:83421"/>
        <dbReference type="ChEBI" id="CHEBI:456216"/>
        <dbReference type="EC" id="2.7.11.1"/>
    </reaction>
</comment>
<comment type="catalytic activity">
    <reaction evidence="6">
        <text>L-threonyl-[protein] + ATP = O-phospho-L-threonyl-[protein] + ADP + H(+)</text>
        <dbReference type="Rhea" id="RHEA:46608"/>
        <dbReference type="Rhea" id="RHEA-COMP:11060"/>
        <dbReference type="Rhea" id="RHEA-COMP:11605"/>
        <dbReference type="ChEBI" id="CHEBI:15378"/>
        <dbReference type="ChEBI" id="CHEBI:30013"/>
        <dbReference type="ChEBI" id="CHEBI:30616"/>
        <dbReference type="ChEBI" id="CHEBI:61977"/>
        <dbReference type="ChEBI" id="CHEBI:456216"/>
        <dbReference type="EC" id="2.7.11.1"/>
    </reaction>
</comment>
<comment type="tissue specificity">
    <text evidence="4">Expressed in anthers, pistils and leaves.</text>
</comment>
<comment type="similarity">
    <text evidence="6">Belongs to the protein kinase superfamily. NEK Ser/Thr protein kinase family. NIMA subfamily.</text>
</comment>
<accession>Q2QMH1</accession>
<accession>B7EKP8</accession>
<feature type="chain" id="PRO_0000314045" description="Serine/threonine-protein kinase Nek2">
    <location>
        <begin position="1"/>
        <end position="591"/>
    </location>
</feature>
<feature type="domain" description="Protein kinase" evidence="1">
    <location>
        <begin position="4"/>
        <end position="258"/>
    </location>
</feature>
<feature type="region of interest" description="Disordered" evidence="3">
    <location>
        <begin position="309"/>
        <end position="331"/>
    </location>
</feature>
<feature type="region of interest" description="Disordered" evidence="3">
    <location>
        <begin position="382"/>
        <end position="408"/>
    </location>
</feature>
<feature type="region of interest" description="Disordered" evidence="3">
    <location>
        <begin position="500"/>
        <end position="534"/>
    </location>
</feature>
<feature type="compositionally biased region" description="Polar residues" evidence="3">
    <location>
        <begin position="391"/>
        <end position="408"/>
    </location>
</feature>
<feature type="compositionally biased region" description="Polar residues" evidence="3">
    <location>
        <begin position="504"/>
        <end position="534"/>
    </location>
</feature>
<feature type="active site" description="Proton acceptor" evidence="1 2">
    <location>
        <position position="129"/>
    </location>
</feature>
<feature type="binding site" evidence="1">
    <location>
        <begin position="10"/>
        <end position="18"/>
    </location>
    <ligand>
        <name>ATP</name>
        <dbReference type="ChEBI" id="CHEBI:30616"/>
    </ligand>
</feature>
<feature type="binding site" evidence="1">
    <location>
        <position position="33"/>
    </location>
    <ligand>
        <name>ATP</name>
        <dbReference type="ChEBI" id="CHEBI:30616"/>
    </ligand>
</feature>
<proteinExistence type="evidence at transcript level"/>
<name>NEK2_ORYSJ</name>
<dbReference type="EC" id="2.7.11.1" evidence="6"/>
<dbReference type="EMBL" id="DP000011">
    <property type="protein sequence ID" value="ABA99823.1"/>
    <property type="molecule type" value="Genomic_DNA"/>
</dbReference>
<dbReference type="EMBL" id="AP008218">
    <property type="protein sequence ID" value="BAF30238.1"/>
    <property type="molecule type" value="Genomic_DNA"/>
</dbReference>
<dbReference type="EMBL" id="AP014968">
    <property type="protein sequence ID" value="BAT17975.1"/>
    <property type="molecule type" value="Genomic_DNA"/>
</dbReference>
<dbReference type="EMBL" id="CM000149">
    <property type="protein sequence ID" value="EAZ21141.1"/>
    <property type="molecule type" value="Genomic_DNA"/>
</dbReference>
<dbReference type="EMBL" id="AK072382">
    <property type="protein sequence ID" value="BAG92945.1"/>
    <property type="molecule type" value="mRNA"/>
</dbReference>
<dbReference type="RefSeq" id="XP_015618225.1">
    <property type="nucleotide sequence ID" value="XM_015762739.1"/>
</dbReference>
<dbReference type="SMR" id="Q2QMH1"/>
<dbReference type="FunCoup" id="Q2QMH1">
    <property type="interactions" value="1002"/>
</dbReference>
<dbReference type="STRING" id="39947.Q2QMH1"/>
<dbReference type="PaxDb" id="39947-Q2QMH1"/>
<dbReference type="EnsemblPlants" id="Os12t0604700-01">
    <property type="protein sequence ID" value="Os12t0604700-01"/>
    <property type="gene ID" value="Os12g0604700"/>
</dbReference>
<dbReference type="Gramene" id="Os12t0604700-01">
    <property type="protein sequence ID" value="Os12t0604700-01"/>
    <property type="gene ID" value="Os12g0604700"/>
</dbReference>
<dbReference type="KEGG" id="dosa:Os12g0604700"/>
<dbReference type="eggNOG" id="KOG0589">
    <property type="taxonomic scope" value="Eukaryota"/>
</dbReference>
<dbReference type="HOGENOM" id="CLU_000288_128_3_1"/>
<dbReference type="InParanoid" id="Q2QMH1"/>
<dbReference type="OMA" id="RNMSPIY"/>
<dbReference type="OrthoDB" id="248923at2759"/>
<dbReference type="Proteomes" id="UP000000763">
    <property type="component" value="Chromosome 12"/>
</dbReference>
<dbReference type="Proteomes" id="UP000007752">
    <property type="component" value="Chromosome 12"/>
</dbReference>
<dbReference type="Proteomes" id="UP000059680">
    <property type="component" value="Chromosome 12"/>
</dbReference>
<dbReference type="ExpressionAtlas" id="Q2QMH1">
    <property type="expression patterns" value="baseline and differential"/>
</dbReference>
<dbReference type="GO" id="GO:0005524">
    <property type="term" value="F:ATP binding"/>
    <property type="evidence" value="ECO:0007669"/>
    <property type="project" value="UniProtKB-KW"/>
</dbReference>
<dbReference type="GO" id="GO:0106310">
    <property type="term" value="F:protein serine kinase activity"/>
    <property type="evidence" value="ECO:0007669"/>
    <property type="project" value="RHEA"/>
</dbReference>
<dbReference type="GO" id="GO:0004674">
    <property type="term" value="F:protein serine/threonine kinase activity"/>
    <property type="evidence" value="ECO:0000318"/>
    <property type="project" value="GO_Central"/>
</dbReference>
<dbReference type="CDD" id="cd08215">
    <property type="entry name" value="STKc_Nek"/>
    <property type="match status" value="1"/>
</dbReference>
<dbReference type="FunFam" id="3.30.200.20:FF:000108">
    <property type="entry name" value="Serine/threonine-protein kinase Nek2"/>
    <property type="match status" value="1"/>
</dbReference>
<dbReference type="Gene3D" id="3.30.200.20">
    <property type="entry name" value="Phosphorylase Kinase, domain 1"/>
    <property type="match status" value="1"/>
</dbReference>
<dbReference type="Gene3D" id="1.10.510.10">
    <property type="entry name" value="Transferase(Phosphotransferase) domain 1"/>
    <property type="match status" value="1"/>
</dbReference>
<dbReference type="InterPro" id="IPR011009">
    <property type="entry name" value="Kinase-like_dom_sf"/>
</dbReference>
<dbReference type="InterPro" id="IPR050660">
    <property type="entry name" value="NEK_Ser/Thr_kinase"/>
</dbReference>
<dbReference type="InterPro" id="IPR000719">
    <property type="entry name" value="Prot_kinase_dom"/>
</dbReference>
<dbReference type="InterPro" id="IPR017441">
    <property type="entry name" value="Protein_kinase_ATP_BS"/>
</dbReference>
<dbReference type="InterPro" id="IPR008271">
    <property type="entry name" value="Ser/Thr_kinase_AS"/>
</dbReference>
<dbReference type="PANTHER" id="PTHR43671">
    <property type="entry name" value="SERINE/THREONINE-PROTEIN KINASE NEK"/>
    <property type="match status" value="1"/>
</dbReference>
<dbReference type="PANTHER" id="PTHR43671:SF66">
    <property type="entry name" value="SERINE_THREONINE-PROTEIN KINASE NEK2"/>
    <property type="match status" value="1"/>
</dbReference>
<dbReference type="Pfam" id="PF00069">
    <property type="entry name" value="Pkinase"/>
    <property type="match status" value="1"/>
</dbReference>
<dbReference type="SMART" id="SM00220">
    <property type="entry name" value="S_TKc"/>
    <property type="match status" value="1"/>
</dbReference>
<dbReference type="SUPFAM" id="SSF56112">
    <property type="entry name" value="Protein kinase-like (PK-like)"/>
    <property type="match status" value="1"/>
</dbReference>
<dbReference type="PROSITE" id="PS00107">
    <property type="entry name" value="PROTEIN_KINASE_ATP"/>
    <property type="match status" value="1"/>
</dbReference>
<dbReference type="PROSITE" id="PS50011">
    <property type="entry name" value="PROTEIN_KINASE_DOM"/>
    <property type="match status" value="1"/>
</dbReference>
<dbReference type="PROSITE" id="PS00108">
    <property type="entry name" value="PROTEIN_KINASE_ST"/>
    <property type="match status" value="1"/>
</dbReference>